<keyword id="KW-0150">Chloroplast</keyword>
<keyword id="KW-0934">Plastid</keyword>
<keyword id="KW-0687">Ribonucleoprotein</keyword>
<keyword id="KW-0689">Ribosomal protein</keyword>
<keyword id="KW-0694">RNA-binding</keyword>
<keyword id="KW-0699">rRNA-binding</keyword>
<name>RR4_EQUBO</name>
<geneLocation type="chloroplast"/>
<proteinExistence type="inferred from homology"/>
<evidence type="ECO:0000250" key="1"/>
<evidence type="ECO:0000305" key="2"/>
<comment type="function">
    <text evidence="1">One of the primary rRNA binding proteins, it binds directly to 16S rRNA where it nucleates assembly of the body of the 30S subunit.</text>
</comment>
<comment type="function">
    <text evidence="1">With S5 and S12 plays an important role in translational accuracy.</text>
</comment>
<comment type="subunit">
    <text evidence="1">Part of the 30S ribosomal subunit. Contacts protein S5. The interaction surface between S4 and S5 is involved in control of translational fidelity (By similarity).</text>
</comment>
<comment type="subcellular location">
    <subcellularLocation>
        <location>Plastid</location>
        <location>Chloroplast</location>
    </subcellularLocation>
</comment>
<comment type="similarity">
    <text evidence="2">Belongs to the universal ribosomal protein uS4 family.</text>
</comment>
<organism>
    <name type="scientific">Equisetum bogotense</name>
    <name type="common">Horsetail</name>
    <dbReference type="NCBI Taxonomy" id="127539"/>
    <lineage>
        <taxon>Eukaryota</taxon>
        <taxon>Viridiplantae</taxon>
        <taxon>Streptophyta</taxon>
        <taxon>Embryophyta</taxon>
        <taxon>Tracheophyta</taxon>
        <taxon>Polypodiopsida</taxon>
        <taxon>Equisetidae</taxon>
        <taxon>Equisetales</taxon>
        <taxon>Equisetaceae</taxon>
        <taxon>Equisetum</taxon>
    </lineage>
</organism>
<gene>
    <name type="primary">rps4</name>
</gene>
<accession>Q6H9L5</accession>
<sequence length="207" mass="23889">MSRYRGPRLKIIRRLRNLPGLTNKLVESKKNQASGSDQSIQKKVSQYCIRLEAKQRLRFNYGLTERQLLNYVRIARCAKGSTGQILLQLLEMRLDNILFRLGVVPTIPSARQLINHRHILVNDRIVDVPSFHCKPKDIITIGAPKIYQSIITKRIESFAKDQIPDHLTLSLSEPKKPKGFVNYLINRESIGLKINELLVVEYYSRKA</sequence>
<dbReference type="EMBL" id="AJ583678">
    <property type="protein sequence ID" value="CAE47532.1"/>
    <property type="molecule type" value="Genomic_DNA"/>
</dbReference>
<dbReference type="SMR" id="Q6H9L5"/>
<dbReference type="GO" id="GO:0009507">
    <property type="term" value="C:chloroplast"/>
    <property type="evidence" value="ECO:0007669"/>
    <property type="project" value="UniProtKB-SubCell"/>
</dbReference>
<dbReference type="GO" id="GO:0015935">
    <property type="term" value="C:small ribosomal subunit"/>
    <property type="evidence" value="ECO:0007669"/>
    <property type="project" value="InterPro"/>
</dbReference>
<dbReference type="GO" id="GO:0019843">
    <property type="term" value="F:rRNA binding"/>
    <property type="evidence" value="ECO:0007669"/>
    <property type="project" value="UniProtKB-UniRule"/>
</dbReference>
<dbReference type="GO" id="GO:0003735">
    <property type="term" value="F:structural constituent of ribosome"/>
    <property type="evidence" value="ECO:0007669"/>
    <property type="project" value="InterPro"/>
</dbReference>
<dbReference type="GO" id="GO:0042274">
    <property type="term" value="P:ribosomal small subunit biogenesis"/>
    <property type="evidence" value="ECO:0007669"/>
    <property type="project" value="TreeGrafter"/>
</dbReference>
<dbReference type="GO" id="GO:0006412">
    <property type="term" value="P:translation"/>
    <property type="evidence" value="ECO:0007669"/>
    <property type="project" value="UniProtKB-UniRule"/>
</dbReference>
<dbReference type="CDD" id="cd00165">
    <property type="entry name" value="S4"/>
    <property type="match status" value="1"/>
</dbReference>
<dbReference type="FunFam" id="3.10.290.10:FF:000001">
    <property type="entry name" value="30S ribosomal protein S4"/>
    <property type="match status" value="1"/>
</dbReference>
<dbReference type="FunFam" id="1.10.1050.10:FF:000002">
    <property type="entry name" value="30S ribosomal protein S4, chloroplastic"/>
    <property type="match status" value="1"/>
</dbReference>
<dbReference type="Gene3D" id="1.10.1050.10">
    <property type="entry name" value="Ribosomal Protein S4 Delta 41, Chain A, domain 1"/>
    <property type="match status" value="1"/>
</dbReference>
<dbReference type="Gene3D" id="3.10.290.10">
    <property type="entry name" value="RNA-binding S4 domain"/>
    <property type="match status" value="1"/>
</dbReference>
<dbReference type="HAMAP" id="MF_01306_B">
    <property type="entry name" value="Ribosomal_uS4_B"/>
    <property type="match status" value="1"/>
</dbReference>
<dbReference type="InterPro" id="IPR022801">
    <property type="entry name" value="Ribosomal_uS4"/>
</dbReference>
<dbReference type="InterPro" id="IPR005709">
    <property type="entry name" value="Ribosomal_uS4_bac-type"/>
</dbReference>
<dbReference type="InterPro" id="IPR018079">
    <property type="entry name" value="Ribosomal_uS4_CS"/>
</dbReference>
<dbReference type="InterPro" id="IPR001912">
    <property type="entry name" value="Ribosomal_uS4_N"/>
</dbReference>
<dbReference type="InterPro" id="IPR002942">
    <property type="entry name" value="S4_RNA-bd"/>
</dbReference>
<dbReference type="InterPro" id="IPR036986">
    <property type="entry name" value="S4_RNA-bd_sf"/>
</dbReference>
<dbReference type="NCBIfam" id="NF003717">
    <property type="entry name" value="PRK05327.1"/>
    <property type="match status" value="1"/>
</dbReference>
<dbReference type="NCBIfam" id="TIGR01017">
    <property type="entry name" value="rpsD_bact"/>
    <property type="match status" value="1"/>
</dbReference>
<dbReference type="PANTHER" id="PTHR11831">
    <property type="entry name" value="30S 40S RIBOSOMAL PROTEIN"/>
    <property type="match status" value="1"/>
</dbReference>
<dbReference type="PANTHER" id="PTHR11831:SF4">
    <property type="entry name" value="SMALL RIBOSOMAL SUBUNIT PROTEIN US4M"/>
    <property type="match status" value="1"/>
</dbReference>
<dbReference type="Pfam" id="PF00163">
    <property type="entry name" value="Ribosomal_S4"/>
    <property type="match status" value="1"/>
</dbReference>
<dbReference type="Pfam" id="PF01479">
    <property type="entry name" value="S4"/>
    <property type="match status" value="1"/>
</dbReference>
<dbReference type="SMART" id="SM01390">
    <property type="entry name" value="Ribosomal_S4"/>
    <property type="match status" value="1"/>
</dbReference>
<dbReference type="SMART" id="SM00363">
    <property type="entry name" value="S4"/>
    <property type="match status" value="1"/>
</dbReference>
<dbReference type="SUPFAM" id="SSF55174">
    <property type="entry name" value="Alpha-L RNA-binding motif"/>
    <property type="match status" value="1"/>
</dbReference>
<dbReference type="PROSITE" id="PS00632">
    <property type="entry name" value="RIBOSOMAL_S4"/>
    <property type="match status" value="1"/>
</dbReference>
<dbReference type="PROSITE" id="PS50889">
    <property type="entry name" value="S4"/>
    <property type="match status" value="1"/>
</dbReference>
<feature type="chain" id="PRO_0000132574" description="Small ribosomal subunit protein uS4c">
    <location>
        <begin position="1"/>
        <end position="207"/>
    </location>
</feature>
<feature type="domain" description="S4 RNA-binding">
    <location>
        <begin position="92"/>
        <end position="153"/>
    </location>
</feature>
<protein>
    <recommendedName>
        <fullName evidence="2">Small ribosomal subunit protein uS4c</fullName>
    </recommendedName>
    <alternativeName>
        <fullName>30S ribosomal protein S4, chloroplastic</fullName>
    </alternativeName>
</protein>
<reference key="1">
    <citation type="journal article" date="2004" name="Syst. Bot.">
        <title>Phylogeny of horsetails (Equisetum) based on the chloroplast rps4 gene and adjacent noncoding sequences.</title>
        <authorList>
            <person name="Guillon J.-M."/>
        </authorList>
        <dbReference type="AGRICOLA" id="IND43653535"/>
    </citation>
    <scope>NUCLEOTIDE SEQUENCE [GENOMIC DNA]</scope>
</reference>